<gene>
    <name evidence="1" type="primary">gatC</name>
    <name type="ordered locus">Glov_3192</name>
</gene>
<comment type="function">
    <text evidence="1">Allows the formation of correctly charged Asn-tRNA(Asn) or Gln-tRNA(Gln) through the transamidation of misacylated Asp-tRNA(Asn) or Glu-tRNA(Gln) in organisms which lack either or both of asparaginyl-tRNA or glutaminyl-tRNA synthetases. The reaction takes place in the presence of glutamine and ATP through an activated phospho-Asp-tRNA(Asn) or phospho-Glu-tRNA(Gln).</text>
</comment>
<comment type="catalytic activity">
    <reaction evidence="1">
        <text>L-glutamyl-tRNA(Gln) + L-glutamine + ATP + H2O = L-glutaminyl-tRNA(Gln) + L-glutamate + ADP + phosphate + H(+)</text>
        <dbReference type="Rhea" id="RHEA:17521"/>
        <dbReference type="Rhea" id="RHEA-COMP:9681"/>
        <dbReference type="Rhea" id="RHEA-COMP:9684"/>
        <dbReference type="ChEBI" id="CHEBI:15377"/>
        <dbReference type="ChEBI" id="CHEBI:15378"/>
        <dbReference type="ChEBI" id="CHEBI:29985"/>
        <dbReference type="ChEBI" id="CHEBI:30616"/>
        <dbReference type="ChEBI" id="CHEBI:43474"/>
        <dbReference type="ChEBI" id="CHEBI:58359"/>
        <dbReference type="ChEBI" id="CHEBI:78520"/>
        <dbReference type="ChEBI" id="CHEBI:78521"/>
        <dbReference type="ChEBI" id="CHEBI:456216"/>
    </reaction>
</comment>
<comment type="catalytic activity">
    <reaction evidence="1">
        <text>L-aspartyl-tRNA(Asn) + L-glutamine + ATP + H2O = L-asparaginyl-tRNA(Asn) + L-glutamate + ADP + phosphate + 2 H(+)</text>
        <dbReference type="Rhea" id="RHEA:14513"/>
        <dbReference type="Rhea" id="RHEA-COMP:9674"/>
        <dbReference type="Rhea" id="RHEA-COMP:9677"/>
        <dbReference type="ChEBI" id="CHEBI:15377"/>
        <dbReference type="ChEBI" id="CHEBI:15378"/>
        <dbReference type="ChEBI" id="CHEBI:29985"/>
        <dbReference type="ChEBI" id="CHEBI:30616"/>
        <dbReference type="ChEBI" id="CHEBI:43474"/>
        <dbReference type="ChEBI" id="CHEBI:58359"/>
        <dbReference type="ChEBI" id="CHEBI:78515"/>
        <dbReference type="ChEBI" id="CHEBI:78516"/>
        <dbReference type="ChEBI" id="CHEBI:456216"/>
    </reaction>
</comment>
<comment type="subunit">
    <text evidence="1">Heterotrimer of A, B and C subunits.</text>
</comment>
<comment type="similarity">
    <text evidence="1">Belongs to the GatC family.</text>
</comment>
<dbReference type="EC" id="6.3.5.-" evidence="1"/>
<dbReference type="EMBL" id="CP001089">
    <property type="protein sequence ID" value="ACD96898.1"/>
    <property type="molecule type" value="Genomic_DNA"/>
</dbReference>
<dbReference type="RefSeq" id="WP_012471222.1">
    <property type="nucleotide sequence ID" value="NC_010814.1"/>
</dbReference>
<dbReference type="SMR" id="B3EA23"/>
<dbReference type="STRING" id="398767.Glov_3192"/>
<dbReference type="KEGG" id="glo:Glov_3192"/>
<dbReference type="eggNOG" id="COG0721">
    <property type="taxonomic scope" value="Bacteria"/>
</dbReference>
<dbReference type="HOGENOM" id="CLU_105899_1_2_7"/>
<dbReference type="OrthoDB" id="9813938at2"/>
<dbReference type="Proteomes" id="UP000002420">
    <property type="component" value="Chromosome"/>
</dbReference>
<dbReference type="GO" id="GO:0050566">
    <property type="term" value="F:asparaginyl-tRNA synthase (glutamine-hydrolyzing) activity"/>
    <property type="evidence" value="ECO:0007669"/>
    <property type="project" value="RHEA"/>
</dbReference>
<dbReference type="GO" id="GO:0005524">
    <property type="term" value="F:ATP binding"/>
    <property type="evidence" value="ECO:0007669"/>
    <property type="project" value="UniProtKB-KW"/>
</dbReference>
<dbReference type="GO" id="GO:0050567">
    <property type="term" value="F:glutaminyl-tRNA synthase (glutamine-hydrolyzing) activity"/>
    <property type="evidence" value="ECO:0007669"/>
    <property type="project" value="UniProtKB-UniRule"/>
</dbReference>
<dbReference type="GO" id="GO:0070681">
    <property type="term" value="P:glutaminyl-tRNAGln biosynthesis via transamidation"/>
    <property type="evidence" value="ECO:0007669"/>
    <property type="project" value="TreeGrafter"/>
</dbReference>
<dbReference type="GO" id="GO:0006450">
    <property type="term" value="P:regulation of translational fidelity"/>
    <property type="evidence" value="ECO:0007669"/>
    <property type="project" value="InterPro"/>
</dbReference>
<dbReference type="GO" id="GO:0006412">
    <property type="term" value="P:translation"/>
    <property type="evidence" value="ECO:0007669"/>
    <property type="project" value="UniProtKB-UniRule"/>
</dbReference>
<dbReference type="Gene3D" id="1.10.20.60">
    <property type="entry name" value="Glu-tRNAGln amidotransferase C subunit, N-terminal domain"/>
    <property type="match status" value="1"/>
</dbReference>
<dbReference type="HAMAP" id="MF_00122">
    <property type="entry name" value="GatC"/>
    <property type="match status" value="1"/>
</dbReference>
<dbReference type="InterPro" id="IPR036113">
    <property type="entry name" value="Asp/Glu-ADT_sf_sub_c"/>
</dbReference>
<dbReference type="InterPro" id="IPR003837">
    <property type="entry name" value="GatC"/>
</dbReference>
<dbReference type="NCBIfam" id="TIGR00135">
    <property type="entry name" value="gatC"/>
    <property type="match status" value="1"/>
</dbReference>
<dbReference type="PANTHER" id="PTHR15004">
    <property type="entry name" value="GLUTAMYL-TRNA(GLN) AMIDOTRANSFERASE SUBUNIT C, MITOCHONDRIAL"/>
    <property type="match status" value="1"/>
</dbReference>
<dbReference type="PANTHER" id="PTHR15004:SF0">
    <property type="entry name" value="GLUTAMYL-TRNA(GLN) AMIDOTRANSFERASE SUBUNIT C, MITOCHONDRIAL"/>
    <property type="match status" value="1"/>
</dbReference>
<dbReference type="Pfam" id="PF02686">
    <property type="entry name" value="GatC"/>
    <property type="match status" value="1"/>
</dbReference>
<dbReference type="SUPFAM" id="SSF141000">
    <property type="entry name" value="Glu-tRNAGln amidotransferase C subunit"/>
    <property type="match status" value="1"/>
</dbReference>
<sequence length="95" mass="10656">MSINQHEIEHVAKLARLTLRDDEKQLFTGQMEAILAYVETLNELNTDDIAPTSHAVPMENAFRPDCVAPSIGHDRALANAPDKNETYFRVPPVIE</sequence>
<keyword id="KW-0067">ATP-binding</keyword>
<keyword id="KW-0436">Ligase</keyword>
<keyword id="KW-0547">Nucleotide-binding</keyword>
<keyword id="KW-0648">Protein biosynthesis</keyword>
<keyword id="KW-1185">Reference proteome</keyword>
<proteinExistence type="inferred from homology"/>
<evidence type="ECO:0000255" key="1">
    <source>
        <dbReference type="HAMAP-Rule" id="MF_00122"/>
    </source>
</evidence>
<name>GATC_TRIL1</name>
<reference key="1">
    <citation type="submission" date="2008-05" db="EMBL/GenBank/DDBJ databases">
        <title>Complete sequence of chromosome of Geobacter lovleyi SZ.</title>
        <authorList>
            <consortium name="US DOE Joint Genome Institute"/>
            <person name="Lucas S."/>
            <person name="Copeland A."/>
            <person name="Lapidus A."/>
            <person name="Glavina del Rio T."/>
            <person name="Dalin E."/>
            <person name="Tice H."/>
            <person name="Bruce D."/>
            <person name="Goodwin L."/>
            <person name="Pitluck S."/>
            <person name="Chertkov O."/>
            <person name="Meincke L."/>
            <person name="Brettin T."/>
            <person name="Detter J.C."/>
            <person name="Han C."/>
            <person name="Tapia R."/>
            <person name="Kuske C.R."/>
            <person name="Schmutz J."/>
            <person name="Larimer F."/>
            <person name="Land M."/>
            <person name="Hauser L."/>
            <person name="Kyrpides N."/>
            <person name="Mikhailova N."/>
            <person name="Sung Y."/>
            <person name="Fletcher K.E."/>
            <person name="Ritalahti K.M."/>
            <person name="Loeffler F.E."/>
            <person name="Richardson P."/>
        </authorList>
    </citation>
    <scope>NUCLEOTIDE SEQUENCE [LARGE SCALE GENOMIC DNA]</scope>
    <source>
        <strain>ATCC BAA-1151 / DSM 17278 / SZ</strain>
    </source>
</reference>
<accession>B3EA23</accession>
<organism>
    <name type="scientific">Trichlorobacter lovleyi (strain ATCC BAA-1151 / DSM 17278 / SZ)</name>
    <name type="common">Geobacter lovleyi</name>
    <dbReference type="NCBI Taxonomy" id="398767"/>
    <lineage>
        <taxon>Bacteria</taxon>
        <taxon>Pseudomonadati</taxon>
        <taxon>Thermodesulfobacteriota</taxon>
        <taxon>Desulfuromonadia</taxon>
        <taxon>Geobacterales</taxon>
        <taxon>Geobacteraceae</taxon>
        <taxon>Trichlorobacter</taxon>
    </lineage>
</organism>
<protein>
    <recommendedName>
        <fullName evidence="1">Aspartyl/glutamyl-tRNA(Asn/Gln) amidotransferase subunit C</fullName>
        <shortName evidence="1">Asp/Glu-ADT subunit C</shortName>
        <ecNumber evidence="1">6.3.5.-</ecNumber>
    </recommendedName>
</protein>
<feature type="chain" id="PRO_1000095285" description="Aspartyl/glutamyl-tRNA(Asn/Gln) amidotransferase subunit C">
    <location>
        <begin position="1"/>
        <end position="95"/>
    </location>
</feature>